<comment type="function">
    <text evidence="1">Nucleotidase that shows phosphatase activity on nucleoside 5'-monophosphates.</text>
</comment>
<comment type="catalytic activity">
    <reaction evidence="1">
        <text>a ribonucleoside 5'-phosphate + H2O = a ribonucleoside + phosphate</text>
        <dbReference type="Rhea" id="RHEA:12484"/>
        <dbReference type="ChEBI" id="CHEBI:15377"/>
        <dbReference type="ChEBI" id="CHEBI:18254"/>
        <dbReference type="ChEBI" id="CHEBI:43474"/>
        <dbReference type="ChEBI" id="CHEBI:58043"/>
        <dbReference type="EC" id="3.1.3.5"/>
    </reaction>
</comment>
<comment type="cofactor">
    <cofactor evidence="1">
        <name>a divalent metal cation</name>
        <dbReference type="ChEBI" id="CHEBI:60240"/>
    </cofactor>
    <text evidence="1">Binds 1 divalent metal cation per subunit.</text>
</comment>
<comment type="subcellular location">
    <subcellularLocation>
        <location evidence="1">Cytoplasm</location>
    </subcellularLocation>
</comment>
<comment type="similarity">
    <text evidence="1">Belongs to the SurE nucleotidase family.</text>
</comment>
<protein>
    <recommendedName>
        <fullName evidence="1">5'-nucleotidase SurE</fullName>
        <ecNumber evidence="1">3.1.3.5</ecNumber>
    </recommendedName>
    <alternativeName>
        <fullName evidence="1">Nucleoside 5'-monophosphate phosphohydrolase</fullName>
    </alternativeName>
</protein>
<name>SURE_PROMA</name>
<organism>
    <name type="scientific">Prochlorococcus marinus (strain SARG / CCMP1375 / SS120)</name>
    <dbReference type="NCBI Taxonomy" id="167539"/>
    <lineage>
        <taxon>Bacteria</taxon>
        <taxon>Bacillati</taxon>
        <taxon>Cyanobacteriota</taxon>
        <taxon>Cyanophyceae</taxon>
        <taxon>Synechococcales</taxon>
        <taxon>Prochlorococcaceae</taxon>
        <taxon>Prochlorococcus</taxon>
    </lineage>
</organism>
<feature type="chain" id="PRO_0000111828" description="5'-nucleotidase SurE">
    <location>
        <begin position="1"/>
        <end position="262"/>
    </location>
</feature>
<feature type="region of interest" description="Disordered" evidence="2">
    <location>
        <begin position="220"/>
        <end position="246"/>
    </location>
</feature>
<feature type="compositionally biased region" description="Basic and acidic residues" evidence="2">
    <location>
        <begin position="220"/>
        <end position="229"/>
    </location>
</feature>
<feature type="compositionally biased region" description="Polar residues" evidence="2">
    <location>
        <begin position="231"/>
        <end position="244"/>
    </location>
</feature>
<feature type="binding site" evidence="1">
    <location>
        <position position="11"/>
    </location>
    <ligand>
        <name>a divalent metal cation</name>
        <dbReference type="ChEBI" id="CHEBI:60240"/>
    </ligand>
</feature>
<feature type="binding site" evidence="1">
    <location>
        <position position="12"/>
    </location>
    <ligand>
        <name>a divalent metal cation</name>
        <dbReference type="ChEBI" id="CHEBI:60240"/>
    </ligand>
</feature>
<feature type="binding site" evidence="1">
    <location>
        <position position="43"/>
    </location>
    <ligand>
        <name>a divalent metal cation</name>
        <dbReference type="ChEBI" id="CHEBI:60240"/>
    </ligand>
</feature>
<feature type="binding site" evidence="1">
    <location>
        <position position="101"/>
    </location>
    <ligand>
        <name>a divalent metal cation</name>
        <dbReference type="ChEBI" id="CHEBI:60240"/>
    </ligand>
</feature>
<proteinExistence type="inferred from homology"/>
<dbReference type="EC" id="3.1.3.5" evidence="1"/>
<dbReference type="EMBL" id="AE017126">
    <property type="protein sequence ID" value="AAQ00389.1"/>
    <property type="molecule type" value="Genomic_DNA"/>
</dbReference>
<dbReference type="RefSeq" id="NP_875736.1">
    <property type="nucleotide sequence ID" value="NC_005042.1"/>
</dbReference>
<dbReference type="RefSeq" id="WP_011125496.1">
    <property type="nucleotide sequence ID" value="NC_005042.1"/>
</dbReference>
<dbReference type="SMR" id="Q7VAV8"/>
<dbReference type="STRING" id="167539.Pro_1345"/>
<dbReference type="EnsemblBacteria" id="AAQ00389">
    <property type="protein sequence ID" value="AAQ00389"/>
    <property type="gene ID" value="Pro_1345"/>
</dbReference>
<dbReference type="KEGG" id="pma:Pro_1345"/>
<dbReference type="PATRIC" id="fig|167539.5.peg.1410"/>
<dbReference type="eggNOG" id="COG0496">
    <property type="taxonomic scope" value="Bacteria"/>
</dbReference>
<dbReference type="HOGENOM" id="CLU_045192_1_3_3"/>
<dbReference type="OrthoDB" id="9780815at2"/>
<dbReference type="Proteomes" id="UP000001420">
    <property type="component" value="Chromosome"/>
</dbReference>
<dbReference type="GO" id="GO:0005737">
    <property type="term" value="C:cytoplasm"/>
    <property type="evidence" value="ECO:0007669"/>
    <property type="project" value="UniProtKB-SubCell"/>
</dbReference>
<dbReference type="GO" id="GO:0008254">
    <property type="term" value="F:3'-nucleotidase activity"/>
    <property type="evidence" value="ECO:0007669"/>
    <property type="project" value="TreeGrafter"/>
</dbReference>
<dbReference type="GO" id="GO:0008253">
    <property type="term" value="F:5'-nucleotidase activity"/>
    <property type="evidence" value="ECO:0007669"/>
    <property type="project" value="UniProtKB-UniRule"/>
</dbReference>
<dbReference type="GO" id="GO:0004309">
    <property type="term" value="F:exopolyphosphatase activity"/>
    <property type="evidence" value="ECO:0007669"/>
    <property type="project" value="TreeGrafter"/>
</dbReference>
<dbReference type="GO" id="GO:0046872">
    <property type="term" value="F:metal ion binding"/>
    <property type="evidence" value="ECO:0007669"/>
    <property type="project" value="UniProtKB-UniRule"/>
</dbReference>
<dbReference type="GO" id="GO:0000166">
    <property type="term" value="F:nucleotide binding"/>
    <property type="evidence" value="ECO:0007669"/>
    <property type="project" value="UniProtKB-KW"/>
</dbReference>
<dbReference type="Gene3D" id="3.40.1210.10">
    <property type="entry name" value="Survival protein SurE-like phosphatase/nucleotidase"/>
    <property type="match status" value="1"/>
</dbReference>
<dbReference type="HAMAP" id="MF_00060">
    <property type="entry name" value="SurE"/>
    <property type="match status" value="1"/>
</dbReference>
<dbReference type="InterPro" id="IPR030048">
    <property type="entry name" value="SurE"/>
</dbReference>
<dbReference type="InterPro" id="IPR002828">
    <property type="entry name" value="SurE-like_Pase/nucleotidase"/>
</dbReference>
<dbReference type="InterPro" id="IPR036523">
    <property type="entry name" value="SurE-like_sf"/>
</dbReference>
<dbReference type="NCBIfam" id="NF001490">
    <property type="entry name" value="PRK00346.1-4"/>
    <property type="match status" value="1"/>
</dbReference>
<dbReference type="NCBIfam" id="NF001492">
    <property type="entry name" value="PRK00346.2-2"/>
    <property type="match status" value="1"/>
</dbReference>
<dbReference type="NCBIfam" id="TIGR00087">
    <property type="entry name" value="surE"/>
    <property type="match status" value="1"/>
</dbReference>
<dbReference type="PANTHER" id="PTHR30457">
    <property type="entry name" value="5'-NUCLEOTIDASE SURE"/>
    <property type="match status" value="1"/>
</dbReference>
<dbReference type="PANTHER" id="PTHR30457:SF12">
    <property type="entry name" value="5'_3'-NUCLEOTIDASE SURE"/>
    <property type="match status" value="1"/>
</dbReference>
<dbReference type="Pfam" id="PF01975">
    <property type="entry name" value="SurE"/>
    <property type="match status" value="1"/>
</dbReference>
<dbReference type="SUPFAM" id="SSF64167">
    <property type="entry name" value="SurE-like"/>
    <property type="match status" value="1"/>
</dbReference>
<keyword id="KW-0963">Cytoplasm</keyword>
<keyword id="KW-0378">Hydrolase</keyword>
<keyword id="KW-0479">Metal-binding</keyword>
<keyword id="KW-0547">Nucleotide-binding</keyword>
<keyword id="KW-1185">Reference proteome</keyword>
<accession>Q7VAV8</accession>
<reference key="1">
    <citation type="journal article" date="2003" name="Proc. Natl. Acad. Sci. U.S.A.">
        <title>Genome sequence of the cyanobacterium Prochlorococcus marinus SS120, a nearly minimal oxyphototrophic genome.</title>
        <authorList>
            <person name="Dufresne A."/>
            <person name="Salanoubat M."/>
            <person name="Partensky F."/>
            <person name="Artiguenave F."/>
            <person name="Axmann I.M."/>
            <person name="Barbe V."/>
            <person name="Duprat S."/>
            <person name="Galperin M.Y."/>
            <person name="Koonin E.V."/>
            <person name="Le Gall F."/>
            <person name="Makarova K.S."/>
            <person name="Ostrowski M."/>
            <person name="Oztas S."/>
            <person name="Robert C."/>
            <person name="Rogozin I.B."/>
            <person name="Scanlan D.J."/>
            <person name="Tandeau de Marsac N."/>
            <person name="Weissenbach J."/>
            <person name="Wincker P."/>
            <person name="Wolf Y.I."/>
            <person name="Hess W.R."/>
        </authorList>
    </citation>
    <scope>NUCLEOTIDE SEQUENCE [LARGE SCALE GENOMIC DNA]</scope>
    <source>
        <strain>SARG / CCMP1375 / SS120</strain>
    </source>
</reference>
<gene>
    <name evidence="1" type="primary">surE</name>
    <name type="ordered locus">Pro_1345</name>
</gene>
<sequence length="262" mass="28538">MKPLKILISNDDGVFAEGIRTLAIAAASRGHEVTVVCPDQERSATGHGLTLQAPIRAERADELFNEGIQAWGCSGTPADCVKLALNELLKEKPDLILSGINHGPNLGTDIFCSGTVAAALEGTLEGIPSLAVSIASFQWRKFKLAGELALNIAENAINQKWPKKLLLNLNIPPCDSEQMGKPGWTRLSIRQYQEQFSKRKDPRGNAYYWLAGEAVKDLESAGDGPKEWPSDVSQIETNSPSLTPIQPDLFWRGNVNDLPKLN</sequence>
<evidence type="ECO:0000255" key="1">
    <source>
        <dbReference type="HAMAP-Rule" id="MF_00060"/>
    </source>
</evidence>
<evidence type="ECO:0000256" key="2">
    <source>
        <dbReference type="SAM" id="MobiDB-lite"/>
    </source>
</evidence>